<reference key="1">
    <citation type="journal article" date="2007" name="Proc. Natl. Acad. Sci. U.S.A.">
        <title>The Orientia tsutsugamushi genome reveals massive proliferation of conjugative type IV secretion system and host-cell interaction genes.</title>
        <authorList>
            <person name="Cho N.-H."/>
            <person name="Kim H.-R."/>
            <person name="Lee J.-H."/>
            <person name="Kim S.-Y."/>
            <person name="Kim J."/>
            <person name="Cha S."/>
            <person name="Kim S.-Y."/>
            <person name="Darby A.C."/>
            <person name="Fuxelius H.-H."/>
            <person name="Yin J."/>
            <person name="Kim J.H."/>
            <person name="Kim J."/>
            <person name="Lee S.J."/>
            <person name="Koh Y.-S."/>
            <person name="Jang W.-J."/>
            <person name="Park K.-H."/>
            <person name="Andersson S.G.E."/>
            <person name="Choi M.-S."/>
            <person name="Kim I.-S."/>
        </authorList>
    </citation>
    <scope>NUCLEOTIDE SEQUENCE [LARGE SCALE GENOMIC DNA]</scope>
    <source>
        <strain>Boryong</strain>
    </source>
</reference>
<dbReference type="EMBL" id="AM494475">
    <property type="protein sequence ID" value="CAM79222.1"/>
    <property type="molecule type" value="Genomic_DNA"/>
</dbReference>
<dbReference type="RefSeq" id="WP_011944303.1">
    <property type="nucleotide sequence ID" value="NC_009488.1"/>
</dbReference>
<dbReference type="SMR" id="A5CC57"/>
<dbReference type="KEGG" id="ots:OTBS_0156"/>
<dbReference type="eggNOG" id="COG0828">
    <property type="taxonomic scope" value="Bacteria"/>
</dbReference>
<dbReference type="HOGENOM" id="CLU_159258_0_2_5"/>
<dbReference type="Proteomes" id="UP000001565">
    <property type="component" value="Chromosome"/>
</dbReference>
<dbReference type="GO" id="GO:1990904">
    <property type="term" value="C:ribonucleoprotein complex"/>
    <property type="evidence" value="ECO:0007669"/>
    <property type="project" value="UniProtKB-KW"/>
</dbReference>
<dbReference type="GO" id="GO:0005840">
    <property type="term" value="C:ribosome"/>
    <property type="evidence" value="ECO:0007669"/>
    <property type="project" value="UniProtKB-KW"/>
</dbReference>
<dbReference type="GO" id="GO:0003735">
    <property type="term" value="F:structural constituent of ribosome"/>
    <property type="evidence" value="ECO:0007669"/>
    <property type="project" value="InterPro"/>
</dbReference>
<dbReference type="GO" id="GO:0006412">
    <property type="term" value="P:translation"/>
    <property type="evidence" value="ECO:0007669"/>
    <property type="project" value="UniProtKB-UniRule"/>
</dbReference>
<dbReference type="Gene3D" id="1.20.5.1150">
    <property type="entry name" value="Ribosomal protein S8"/>
    <property type="match status" value="1"/>
</dbReference>
<dbReference type="HAMAP" id="MF_00358">
    <property type="entry name" value="Ribosomal_bS21"/>
    <property type="match status" value="1"/>
</dbReference>
<dbReference type="InterPro" id="IPR001911">
    <property type="entry name" value="Ribosomal_bS21"/>
</dbReference>
<dbReference type="InterPro" id="IPR038380">
    <property type="entry name" value="Ribosomal_bS21_sf"/>
</dbReference>
<dbReference type="NCBIfam" id="TIGR00030">
    <property type="entry name" value="S21p"/>
    <property type="match status" value="1"/>
</dbReference>
<dbReference type="Pfam" id="PF01165">
    <property type="entry name" value="Ribosomal_S21"/>
    <property type="match status" value="1"/>
</dbReference>
<feature type="chain" id="PRO_1000005143" description="Small ribosomal subunit protein bS21">
    <location>
        <begin position="1"/>
        <end position="68"/>
    </location>
</feature>
<feature type="region of interest" description="Disordered" evidence="2">
    <location>
        <begin position="39"/>
        <end position="68"/>
    </location>
</feature>
<feature type="compositionally biased region" description="Basic residues" evidence="2">
    <location>
        <begin position="54"/>
        <end position="68"/>
    </location>
</feature>
<accession>A5CC57</accession>
<gene>
    <name evidence="1" type="primary">rpsU</name>
    <name type="ordered locus">OTBS_0156</name>
</gene>
<organism>
    <name type="scientific">Orientia tsutsugamushi (strain Boryong)</name>
    <name type="common">Rickettsia tsutsugamushi</name>
    <dbReference type="NCBI Taxonomy" id="357244"/>
    <lineage>
        <taxon>Bacteria</taxon>
        <taxon>Pseudomonadati</taxon>
        <taxon>Pseudomonadota</taxon>
        <taxon>Alphaproteobacteria</taxon>
        <taxon>Rickettsiales</taxon>
        <taxon>Rickettsiaceae</taxon>
        <taxon>Rickettsieae</taxon>
        <taxon>Orientia</taxon>
    </lineage>
</organism>
<proteinExistence type="inferred from homology"/>
<comment type="similarity">
    <text evidence="1">Belongs to the bacterial ribosomal protein bS21 family.</text>
</comment>
<sequence length="68" mass="8430">MIHVPVNANNSDLAIRSLKKKMQRELVFRSMKMSRFYEPPSVKRVRKKQESERRHRKERAMRRRMMEE</sequence>
<protein>
    <recommendedName>
        <fullName evidence="1">Small ribosomal subunit protein bS21</fullName>
    </recommendedName>
    <alternativeName>
        <fullName evidence="3">30S ribosomal protein S21</fullName>
    </alternativeName>
</protein>
<keyword id="KW-1185">Reference proteome</keyword>
<keyword id="KW-0687">Ribonucleoprotein</keyword>
<keyword id="KW-0689">Ribosomal protein</keyword>
<name>RS21_ORITB</name>
<evidence type="ECO:0000255" key="1">
    <source>
        <dbReference type="HAMAP-Rule" id="MF_00358"/>
    </source>
</evidence>
<evidence type="ECO:0000256" key="2">
    <source>
        <dbReference type="SAM" id="MobiDB-lite"/>
    </source>
</evidence>
<evidence type="ECO:0000305" key="3"/>